<accession>P59348</accession>
<protein>
    <recommendedName>
        <fullName evidence="1">UPF0229 protein bll6755</fullName>
    </recommendedName>
</protein>
<proteinExistence type="inferred from homology"/>
<name>Y6755_BRADU</name>
<reference key="1">
    <citation type="journal article" date="2002" name="DNA Res.">
        <title>Complete genomic sequence of nitrogen-fixing symbiotic bacterium Bradyrhizobium japonicum USDA110.</title>
        <authorList>
            <person name="Kaneko T."/>
            <person name="Nakamura Y."/>
            <person name="Sato S."/>
            <person name="Minamisawa K."/>
            <person name="Uchiumi T."/>
            <person name="Sasamoto S."/>
            <person name="Watanabe A."/>
            <person name="Idesawa K."/>
            <person name="Iriguchi M."/>
            <person name="Kawashima K."/>
            <person name="Kohara M."/>
            <person name="Matsumoto M."/>
            <person name="Shimpo S."/>
            <person name="Tsuruoka H."/>
            <person name="Wada T."/>
            <person name="Yamada M."/>
            <person name="Tabata S."/>
        </authorList>
    </citation>
    <scope>NUCLEOTIDE SEQUENCE [LARGE SCALE GENOMIC DNA]</scope>
    <source>
        <strain>JCM 10833 / BCRC 13528 / IAM 13628 / NBRC 14792 / USDA 110</strain>
    </source>
</reference>
<organism>
    <name type="scientific">Bradyrhizobium diazoefficiens (strain JCM 10833 / BCRC 13528 / IAM 13628 / NBRC 14792 / USDA 110)</name>
    <dbReference type="NCBI Taxonomy" id="224911"/>
    <lineage>
        <taxon>Bacteria</taxon>
        <taxon>Pseudomonadati</taxon>
        <taxon>Pseudomonadota</taxon>
        <taxon>Alphaproteobacteria</taxon>
        <taxon>Hyphomicrobiales</taxon>
        <taxon>Nitrobacteraceae</taxon>
        <taxon>Bradyrhizobium</taxon>
    </lineage>
</organism>
<comment type="similarity">
    <text evidence="1">Belongs to the UPF0229 family.</text>
</comment>
<dbReference type="EMBL" id="BA000040">
    <property type="protein sequence ID" value="BAC52020.1"/>
    <property type="molecule type" value="Genomic_DNA"/>
</dbReference>
<dbReference type="RefSeq" id="NP_773395.1">
    <property type="nucleotide sequence ID" value="NC_004463.1"/>
</dbReference>
<dbReference type="SMR" id="P59348"/>
<dbReference type="FunCoup" id="P59348">
    <property type="interactions" value="9"/>
</dbReference>
<dbReference type="STRING" id="224911.AAV28_31370"/>
<dbReference type="EnsemblBacteria" id="BAC52020">
    <property type="protein sequence ID" value="BAC52020"/>
    <property type="gene ID" value="BAC52020"/>
</dbReference>
<dbReference type="KEGG" id="bja:bll6755"/>
<dbReference type="PATRIC" id="fig|224911.44.peg.6776"/>
<dbReference type="eggNOG" id="COG2718">
    <property type="taxonomic scope" value="Bacteria"/>
</dbReference>
<dbReference type="HOGENOM" id="CLU_049702_0_0_5"/>
<dbReference type="InParanoid" id="P59348"/>
<dbReference type="OrthoDB" id="9788289at2"/>
<dbReference type="PhylomeDB" id="P59348"/>
<dbReference type="Proteomes" id="UP000002526">
    <property type="component" value="Chromosome"/>
</dbReference>
<dbReference type="HAMAP" id="MF_01232">
    <property type="entry name" value="UPF0229"/>
    <property type="match status" value="1"/>
</dbReference>
<dbReference type="InterPro" id="IPR006698">
    <property type="entry name" value="UPF0229"/>
</dbReference>
<dbReference type="InterPro" id="IPR036465">
    <property type="entry name" value="vWFA_dom_sf"/>
</dbReference>
<dbReference type="NCBIfam" id="NF003707">
    <property type="entry name" value="PRK05325.1-2"/>
    <property type="match status" value="1"/>
</dbReference>
<dbReference type="PANTHER" id="PTHR30510">
    <property type="entry name" value="UPF0229 PROTEIN YEAH"/>
    <property type="match status" value="1"/>
</dbReference>
<dbReference type="PANTHER" id="PTHR30510:SF2">
    <property type="entry name" value="UPF0229 PROTEIN YEAH"/>
    <property type="match status" value="1"/>
</dbReference>
<dbReference type="Pfam" id="PF04285">
    <property type="entry name" value="DUF444"/>
    <property type="match status" value="1"/>
</dbReference>
<dbReference type="SUPFAM" id="SSF53300">
    <property type="entry name" value="vWA-like"/>
    <property type="match status" value="1"/>
</dbReference>
<gene>
    <name type="ordered locus">bll6755</name>
</gene>
<sequence length="427" mass="48301">MPIHIIDRRLNPGGKSLENRQRFLRRAKSLVQGAVKKTSQERDIKDVLEGGEVTIPLDGMHEPRFRREGGTRDMVLPGNKKFVEGDYLQRSGQGSAKDSGPGEGDSEDAFRFVLSRDEFVDLFLDDLELPDLAKRKIAQTESEGIQRAGYTTSGSPANISVSRTVKLALARRIALKRPRKDEIEELEAAIAACTDEDERVVLLAELEKLMAKTKRIPFIDPLDIRYRRFETVPKPVAQAVMFCLMDVSGSMSEHMKDLAKRFYMLLYVFLKRRYKHVEIVFIRHTDRAEEVDEQTFFYGPASGGTLVSSALQAMHDIVRERFNPSDWNIYAAQASDGDNSYSDGELTGLLLTDKILPVCQFFAYLEVGESGGSAFDLSDSSLWTLYERLRNSGAPLSMRKVSERSEIFPVFHDLFQRRETSQEKAAP</sequence>
<keyword id="KW-1185">Reference proteome</keyword>
<evidence type="ECO:0000255" key="1">
    <source>
        <dbReference type="HAMAP-Rule" id="MF_01232"/>
    </source>
</evidence>
<evidence type="ECO:0000256" key="2">
    <source>
        <dbReference type="SAM" id="MobiDB-lite"/>
    </source>
</evidence>
<feature type="chain" id="PRO_0000068192" description="UPF0229 protein bll6755">
    <location>
        <begin position="1"/>
        <end position="427"/>
    </location>
</feature>
<feature type="region of interest" description="Disordered" evidence="2">
    <location>
        <begin position="86"/>
        <end position="107"/>
    </location>
</feature>